<organism>
    <name type="scientific">Schizosaccharomyces pombe (strain 972 / ATCC 24843)</name>
    <name type="common">Fission yeast</name>
    <dbReference type="NCBI Taxonomy" id="284812"/>
    <lineage>
        <taxon>Eukaryota</taxon>
        <taxon>Fungi</taxon>
        <taxon>Dikarya</taxon>
        <taxon>Ascomycota</taxon>
        <taxon>Taphrinomycotina</taxon>
        <taxon>Schizosaccharomycetes</taxon>
        <taxon>Schizosaccharomycetales</taxon>
        <taxon>Schizosaccharomycetaceae</taxon>
        <taxon>Schizosaccharomyces</taxon>
    </lineage>
</organism>
<reference key="1">
    <citation type="journal article" date="2002" name="Nature">
        <title>The genome sequence of Schizosaccharomyces pombe.</title>
        <authorList>
            <person name="Wood V."/>
            <person name="Gwilliam R."/>
            <person name="Rajandream M.A."/>
            <person name="Lyne M.H."/>
            <person name="Lyne R."/>
            <person name="Stewart A."/>
            <person name="Sgouros J.G."/>
            <person name="Peat N."/>
            <person name="Hayles J."/>
            <person name="Baker S.G."/>
            <person name="Basham D."/>
            <person name="Bowman S."/>
            <person name="Brooks K."/>
            <person name="Brown D."/>
            <person name="Brown S."/>
            <person name="Chillingworth T."/>
            <person name="Churcher C.M."/>
            <person name="Collins M."/>
            <person name="Connor R."/>
            <person name="Cronin A."/>
            <person name="Davis P."/>
            <person name="Feltwell T."/>
            <person name="Fraser A."/>
            <person name="Gentles S."/>
            <person name="Goble A."/>
            <person name="Hamlin N."/>
            <person name="Harris D.E."/>
            <person name="Hidalgo J."/>
            <person name="Hodgson G."/>
            <person name="Holroyd S."/>
            <person name="Hornsby T."/>
            <person name="Howarth S."/>
            <person name="Huckle E.J."/>
            <person name="Hunt S."/>
            <person name="Jagels K."/>
            <person name="James K.D."/>
            <person name="Jones L."/>
            <person name="Jones M."/>
            <person name="Leather S."/>
            <person name="McDonald S."/>
            <person name="McLean J."/>
            <person name="Mooney P."/>
            <person name="Moule S."/>
            <person name="Mungall K.L."/>
            <person name="Murphy L.D."/>
            <person name="Niblett D."/>
            <person name="Odell C."/>
            <person name="Oliver K."/>
            <person name="O'Neil S."/>
            <person name="Pearson D."/>
            <person name="Quail M.A."/>
            <person name="Rabbinowitsch E."/>
            <person name="Rutherford K.M."/>
            <person name="Rutter S."/>
            <person name="Saunders D."/>
            <person name="Seeger K."/>
            <person name="Sharp S."/>
            <person name="Skelton J."/>
            <person name="Simmonds M.N."/>
            <person name="Squares R."/>
            <person name="Squares S."/>
            <person name="Stevens K."/>
            <person name="Taylor K."/>
            <person name="Taylor R.G."/>
            <person name="Tivey A."/>
            <person name="Walsh S.V."/>
            <person name="Warren T."/>
            <person name="Whitehead S."/>
            <person name="Woodward J.R."/>
            <person name="Volckaert G."/>
            <person name="Aert R."/>
            <person name="Robben J."/>
            <person name="Grymonprez B."/>
            <person name="Weltjens I."/>
            <person name="Vanstreels E."/>
            <person name="Rieger M."/>
            <person name="Schaefer M."/>
            <person name="Mueller-Auer S."/>
            <person name="Gabel C."/>
            <person name="Fuchs M."/>
            <person name="Duesterhoeft A."/>
            <person name="Fritzc C."/>
            <person name="Holzer E."/>
            <person name="Moestl D."/>
            <person name="Hilbert H."/>
            <person name="Borzym K."/>
            <person name="Langer I."/>
            <person name="Beck A."/>
            <person name="Lehrach H."/>
            <person name="Reinhardt R."/>
            <person name="Pohl T.M."/>
            <person name="Eger P."/>
            <person name="Zimmermann W."/>
            <person name="Wedler H."/>
            <person name="Wambutt R."/>
            <person name="Purnelle B."/>
            <person name="Goffeau A."/>
            <person name="Cadieu E."/>
            <person name="Dreano S."/>
            <person name="Gloux S."/>
            <person name="Lelaure V."/>
            <person name="Mottier S."/>
            <person name="Galibert F."/>
            <person name="Aves S.J."/>
            <person name="Xiang Z."/>
            <person name="Hunt C."/>
            <person name="Moore K."/>
            <person name="Hurst S.M."/>
            <person name="Lucas M."/>
            <person name="Rochet M."/>
            <person name="Gaillardin C."/>
            <person name="Tallada V.A."/>
            <person name="Garzon A."/>
            <person name="Thode G."/>
            <person name="Daga R.R."/>
            <person name="Cruzado L."/>
            <person name="Jimenez J."/>
            <person name="Sanchez M."/>
            <person name="del Rey F."/>
            <person name="Benito J."/>
            <person name="Dominguez A."/>
            <person name="Revuelta J.L."/>
            <person name="Moreno S."/>
            <person name="Armstrong J."/>
            <person name="Forsburg S.L."/>
            <person name="Cerutti L."/>
            <person name="Lowe T."/>
            <person name="McCombie W.R."/>
            <person name="Paulsen I."/>
            <person name="Potashkin J."/>
            <person name="Shpakovski G.V."/>
            <person name="Ussery D."/>
            <person name="Barrell B.G."/>
            <person name="Nurse P."/>
        </authorList>
    </citation>
    <scope>NUCLEOTIDE SEQUENCE [LARGE SCALE GENOMIC DNA]</scope>
    <source>
        <strain>972 / ATCC 24843</strain>
    </source>
</reference>
<name>SNF7_SCHPO</name>
<accession>Q9P7F7</accession>
<comment type="function">
    <text evidence="1">Required for the sorting and concentration of proteins resulting in the entry of these proteins into the invaginating vesicles of the multivesicular body (MVB).</text>
</comment>
<comment type="subunit">
    <text evidence="1">A component of the endosomal sorting required for transport complex III (ESCRT-III).</text>
</comment>
<comment type="subcellular location">
    <subcellularLocation>
        <location evidence="1">Cytoplasm</location>
    </subcellularLocation>
    <subcellularLocation>
        <location evidence="1">Endosome membrane</location>
        <topology evidence="1">Peripheral membrane protein</topology>
    </subcellularLocation>
</comment>
<comment type="similarity">
    <text evidence="4">Belongs to the SNF7 family.</text>
</comment>
<keyword id="KW-0175">Coiled coil</keyword>
<keyword id="KW-0963">Cytoplasm</keyword>
<keyword id="KW-0967">Endosome</keyword>
<keyword id="KW-0472">Membrane</keyword>
<keyword id="KW-1185">Reference proteome</keyword>
<gene>
    <name type="primary">snf7</name>
    <name type="synonym">vps32</name>
    <name type="ORF">SPAC1142.07c</name>
</gene>
<proteinExistence type="inferred from homology"/>
<dbReference type="EMBL" id="CU329670">
    <property type="protein sequence ID" value="CAB77014.1"/>
    <property type="molecule type" value="Genomic_DNA"/>
</dbReference>
<dbReference type="RefSeq" id="NP_594271.1">
    <property type="nucleotide sequence ID" value="NM_001019694.2"/>
</dbReference>
<dbReference type="SMR" id="Q9P7F7"/>
<dbReference type="BioGRID" id="279363">
    <property type="interactions" value="7"/>
</dbReference>
<dbReference type="FunCoup" id="Q9P7F7">
    <property type="interactions" value="327"/>
</dbReference>
<dbReference type="STRING" id="284812.Q9P7F7"/>
<dbReference type="iPTMnet" id="Q9P7F7"/>
<dbReference type="PaxDb" id="4896-SPAC1142.07c.1"/>
<dbReference type="EnsemblFungi" id="SPAC1142.07c.1">
    <property type="protein sequence ID" value="SPAC1142.07c.1:pep"/>
    <property type="gene ID" value="SPAC1142.07c"/>
</dbReference>
<dbReference type="GeneID" id="2542922"/>
<dbReference type="KEGG" id="spo:2542922"/>
<dbReference type="PomBase" id="SPAC1142.07c"/>
<dbReference type="VEuPathDB" id="FungiDB:SPAC1142.07c"/>
<dbReference type="eggNOG" id="KOG1656">
    <property type="taxonomic scope" value="Eukaryota"/>
</dbReference>
<dbReference type="HOGENOM" id="CLU_071097_1_1_1"/>
<dbReference type="InParanoid" id="Q9P7F7"/>
<dbReference type="OMA" id="MKQIHGG"/>
<dbReference type="PhylomeDB" id="Q9P7F7"/>
<dbReference type="Reactome" id="R-SPO-1632852">
    <property type="pathway name" value="Macroautophagy"/>
</dbReference>
<dbReference type="Reactome" id="R-SPO-917729">
    <property type="pathway name" value="Endosomal Sorting Complex Required For Transport (ESCRT)"/>
</dbReference>
<dbReference type="Reactome" id="R-SPO-9668328">
    <property type="pathway name" value="Sealing of the nuclear envelope (NE) by ESCRT-III"/>
</dbReference>
<dbReference type="PRO" id="PR:Q9P7F7"/>
<dbReference type="Proteomes" id="UP000002485">
    <property type="component" value="Chromosome I"/>
</dbReference>
<dbReference type="GO" id="GO:0005737">
    <property type="term" value="C:cytoplasm"/>
    <property type="evidence" value="ECO:0007005"/>
    <property type="project" value="PomBase"/>
</dbReference>
<dbReference type="GO" id="GO:0009898">
    <property type="term" value="C:cytoplasmic side of plasma membrane"/>
    <property type="evidence" value="ECO:0000318"/>
    <property type="project" value="GO_Central"/>
</dbReference>
<dbReference type="GO" id="GO:0000815">
    <property type="term" value="C:ESCRT III complex"/>
    <property type="evidence" value="ECO:0000318"/>
    <property type="project" value="GO_Central"/>
</dbReference>
<dbReference type="GO" id="GO:0180028">
    <property type="term" value="C:mitotic spindle pole body attachment site"/>
    <property type="evidence" value="ECO:0000269"/>
    <property type="project" value="PomBase"/>
</dbReference>
<dbReference type="GO" id="GO:0005771">
    <property type="term" value="C:multivesicular body"/>
    <property type="evidence" value="ECO:0000318"/>
    <property type="project" value="GO_Central"/>
</dbReference>
<dbReference type="GO" id="GO:0045324">
    <property type="term" value="P:late endosome to vacuole transport"/>
    <property type="evidence" value="ECO:0000315"/>
    <property type="project" value="PomBase"/>
</dbReference>
<dbReference type="GO" id="GO:0032511">
    <property type="term" value="P:late endosome to vacuole transport via multivesicular body sorting pathway"/>
    <property type="evidence" value="ECO:0000318"/>
    <property type="project" value="GO_Central"/>
</dbReference>
<dbReference type="GO" id="GO:0007084">
    <property type="term" value="P:mitotic nuclear membrane reassembly"/>
    <property type="evidence" value="ECO:0000303"/>
    <property type="project" value="PomBase"/>
</dbReference>
<dbReference type="GO" id="GO:0043328">
    <property type="term" value="P:protein transport to vacuole involved in ubiquitin-dependent protein catabolic process via the multivesicular body sorting pathway"/>
    <property type="evidence" value="ECO:0000315"/>
    <property type="project" value="PomBase"/>
</dbReference>
<dbReference type="GO" id="GO:0006900">
    <property type="term" value="P:vesicle budding from membrane"/>
    <property type="evidence" value="ECO:0000318"/>
    <property type="project" value="GO_Central"/>
</dbReference>
<dbReference type="FunFam" id="1.10.287.1060:FF:000007">
    <property type="entry name" value="Charged multivesicular body protein 7"/>
    <property type="match status" value="1"/>
</dbReference>
<dbReference type="Gene3D" id="6.10.250.1710">
    <property type="match status" value="1"/>
</dbReference>
<dbReference type="Gene3D" id="1.10.287.1060">
    <property type="entry name" value="ESAT-6-like"/>
    <property type="match status" value="1"/>
</dbReference>
<dbReference type="InterPro" id="IPR005024">
    <property type="entry name" value="Snf7_fam"/>
</dbReference>
<dbReference type="PANTHER" id="PTHR22761">
    <property type="entry name" value="CHARGED MULTIVESICULAR BODY PROTEIN"/>
    <property type="match status" value="1"/>
</dbReference>
<dbReference type="PANTHER" id="PTHR22761:SF10">
    <property type="entry name" value="GH13992P"/>
    <property type="match status" value="1"/>
</dbReference>
<dbReference type="Pfam" id="PF03357">
    <property type="entry name" value="Snf7"/>
    <property type="match status" value="1"/>
</dbReference>
<protein>
    <recommendedName>
        <fullName>Vacuolar-sorting protein snf7</fullName>
    </recommendedName>
    <alternativeName>
        <fullName>Vacuolar protein-sorting-associated protein 32</fullName>
    </alternativeName>
</protein>
<sequence>MSGFLRWFGGNRSKDTTKDTIVRFQEMLALYDKKEEVLERQIAEQTEIARKNATTNKRLALTALKRKKMHENELVKIEGSRNNIEQQLFSIQNANLNFETLQAMRQGAEAMKSIQRGMDADKVDQIMDKIRDQQTISEEISTMISTPVGLNAEIDEDELANELDELQQMELDSKMLGAEKPPVHTPAVPAVPSQVKDLPSISKPQELDEEEELRKLQAEFSL</sequence>
<evidence type="ECO:0000250" key="1"/>
<evidence type="ECO:0000255" key="2"/>
<evidence type="ECO:0000256" key="3">
    <source>
        <dbReference type="SAM" id="MobiDB-lite"/>
    </source>
</evidence>
<evidence type="ECO:0000305" key="4"/>
<feature type="chain" id="PRO_0000211444" description="Vacuolar-sorting protein snf7">
    <location>
        <begin position="1"/>
        <end position="222"/>
    </location>
</feature>
<feature type="region of interest" description="Disordered" evidence="3">
    <location>
        <begin position="178"/>
        <end position="222"/>
    </location>
</feature>
<feature type="coiled-coil region" evidence="2">
    <location>
        <begin position="24"/>
        <end position="111"/>
    </location>
</feature>
<feature type="coiled-coil region" evidence="2">
    <location>
        <begin position="150"/>
        <end position="176"/>
    </location>
</feature>
<feature type="compositionally biased region" description="Basic and acidic residues" evidence="3">
    <location>
        <begin position="212"/>
        <end position="222"/>
    </location>
</feature>